<protein>
    <recommendedName>
        <fullName>Cytochrome b5 type B</fullName>
    </recommendedName>
    <alternativeName>
        <fullName>Cytochrome b5 outer mitochondrial membrane isoform</fullName>
    </alternativeName>
</protein>
<organism>
    <name type="scientific">Mus musculus</name>
    <name type="common">Mouse</name>
    <dbReference type="NCBI Taxonomy" id="10090"/>
    <lineage>
        <taxon>Eukaryota</taxon>
        <taxon>Metazoa</taxon>
        <taxon>Chordata</taxon>
        <taxon>Craniata</taxon>
        <taxon>Vertebrata</taxon>
        <taxon>Euteleostomi</taxon>
        <taxon>Mammalia</taxon>
        <taxon>Eutheria</taxon>
        <taxon>Euarchontoglires</taxon>
        <taxon>Glires</taxon>
        <taxon>Rodentia</taxon>
        <taxon>Myomorpha</taxon>
        <taxon>Muroidea</taxon>
        <taxon>Muridae</taxon>
        <taxon>Murinae</taxon>
        <taxon>Mus</taxon>
        <taxon>Mus</taxon>
    </lineage>
</organism>
<proteinExistence type="evidence at protein level"/>
<accession>Q9CQX2</accession>
<accession>Q9D1M6</accession>
<accession>Q9D8R3</accession>
<feature type="propeptide" id="PRO_0000006473" evidence="3">
    <location>
        <begin position="1"/>
        <end position="11"/>
    </location>
</feature>
<feature type="chain" id="PRO_0000006474" description="Cytochrome b5 type B">
    <location>
        <begin position="12"/>
        <end position="146"/>
    </location>
</feature>
<feature type="transmembrane region" description="Helical" evidence="4">
    <location>
        <begin position="119"/>
        <end position="136"/>
    </location>
</feature>
<feature type="domain" description="Cytochrome b5 heme-binding" evidence="5">
    <location>
        <begin position="20"/>
        <end position="96"/>
    </location>
</feature>
<feature type="binding site" description="axial binding residue" evidence="5">
    <location>
        <position position="55"/>
    </location>
    <ligand>
        <name>heme</name>
        <dbReference type="ChEBI" id="CHEBI:30413"/>
    </ligand>
    <ligandPart>
        <name>Fe</name>
        <dbReference type="ChEBI" id="CHEBI:18248"/>
    </ligandPart>
</feature>
<feature type="binding site" description="axial binding residue" evidence="5">
    <location>
        <position position="79"/>
    </location>
    <ligand>
        <name>heme</name>
        <dbReference type="ChEBI" id="CHEBI:30413"/>
    </ligand>
    <ligandPart>
        <name>Fe</name>
        <dbReference type="ChEBI" id="CHEBI:18248"/>
    </ligandPart>
</feature>
<feature type="modified residue" description="Phosphoserine" evidence="2">
    <location>
        <position position="19"/>
    </location>
</feature>
<feature type="modified residue" description="N6-acetyllysine" evidence="2">
    <location>
        <position position="30"/>
    </location>
</feature>
<feature type="modified residue" description="Phosphoserine" evidence="7 8">
    <location>
        <position position="33"/>
    </location>
</feature>
<feature type="modified residue" description="Phosphoserine" evidence="8">
    <location>
        <position position="80"/>
    </location>
</feature>
<feature type="sequence conflict" description="In Ref. 1; BAB25251." evidence="6" ref="1">
    <original>R</original>
    <variation>E</variation>
    <location>
        <position position="31"/>
    </location>
</feature>
<feature type="sequence conflict" description="In Ref. 1; BAB22721." evidence="6" ref="1">
    <original>D</original>
    <variation>G</variation>
    <location>
        <position position="142"/>
    </location>
</feature>
<dbReference type="EMBL" id="AK003333">
    <property type="protein sequence ID" value="BAB22721.1"/>
    <property type="molecule type" value="mRNA"/>
</dbReference>
<dbReference type="EMBL" id="AK003815">
    <property type="protein sequence ID" value="BAB23012.1"/>
    <property type="molecule type" value="mRNA"/>
</dbReference>
<dbReference type="EMBL" id="AK007780">
    <property type="protein sequence ID" value="BAB25251.1"/>
    <property type="molecule type" value="mRNA"/>
</dbReference>
<dbReference type="EMBL" id="AK019263">
    <property type="protein sequence ID" value="BAB31635.1"/>
    <property type="molecule type" value="mRNA"/>
</dbReference>
<dbReference type="EMBL" id="AK052810">
    <property type="protein sequence ID" value="BAC35156.1"/>
    <property type="molecule type" value="mRNA"/>
</dbReference>
<dbReference type="EMBL" id="AK088970">
    <property type="protein sequence ID" value="BAC40677.1"/>
    <property type="molecule type" value="mRNA"/>
</dbReference>
<dbReference type="EMBL" id="BC054749">
    <property type="protein sequence ID" value="AAH54749.1"/>
    <property type="molecule type" value="mRNA"/>
</dbReference>
<dbReference type="EMBL" id="BC058812">
    <property type="protein sequence ID" value="AAH58812.1"/>
    <property type="molecule type" value="mRNA"/>
</dbReference>
<dbReference type="EMBL" id="BC062980">
    <property type="protein sequence ID" value="AAH62980.1"/>
    <property type="molecule type" value="mRNA"/>
</dbReference>
<dbReference type="CCDS" id="CCDS22647.1"/>
<dbReference type="RefSeq" id="NP_079834.2">
    <property type="nucleotide sequence ID" value="NM_025558.5"/>
</dbReference>
<dbReference type="SMR" id="Q9CQX2"/>
<dbReference type="BioGRID" id="211466">
    <property type="interactions" value="4"/>
</dbReference>
<dbReference type="FunCoup" id="Q9CQX2">
    <property type="interactions" value="2675"/>
</dbReference>
<dbReference type="IntAct" id="Q9CQX2">
    <property type="interactions" value="1"/>
</dbReference>
<dbReference type="STRING" id="10090.ENSMUSP00000034400"/>
<dbReference type="GlyGen" id="Q9CQX2">
    <property type="glycosylation" value="1 site, 1 O-linked glycan (1 site)"/>
</dbReference>
<dbReference type="iPTMnet" id="Q9CQX2"/>
<dbReference type="PhosphoSitePlus" id="Q9CQX2"/>
<dbReference type="SwissPalm" id="Q9CQX2"/>
<dbReference type="jPOST" id="Q9CQX2"/>
<dbReference type="PaxDb" id="10090-ENSMUSP00000034400"/>
<dbReference type="ProteomicsDB" id="279250"/>
<dbReference type="Pumba" id="Q9CQX2"/>
<dbReference type="TopDownProteomics" id="Q9CQX2"/>
<dbReference type="Antibodypedia" id="2014">
    <property type="antibodies" value="88 antibodies from 22 providers"/>
</dbReference>
<dbReference type="DNASU" id="66427"/>
<dbReference type="Ensembl" id="ENSMUST00000034400.5">
    <property type="protein sequence ID" value="ENSMUSP00000034400.4"/>
    <property type="gene ID" value="ENSMUSG00000031924.5"/>
</dbReference>
<dbReference type="GeneID" id="66427"/>
<dbReference type="KEGG" id="mmu:66427"/>
<dbReference type="UCSC" id="uc009nhg.1">
    <property type="organism name" value="mouse"/>
</dbReference>
<dbReference type="AGR" id="MGI:1913677"/>
<dbReference type="CTD" id="80777"/>
<dbReference type="MGI" id="MGI:1913677">
    <property type="gene designation" value="Cyb5b"/>
</dbReference>
<dbReference type="VEuPathDB" id="HostDB:ENSMUSG00000031924"/>
<dbReference type="eggNOG" id="KOG0537">
    <property type="taxonomic scope" value="Eukaryota"/>
</dbReference>
<dbReference type="GeneTree" id="ENSGT00940000155584"/>
<dbReference type="HOGENOM" id="CLU_102602_3_3_1"/>
<dbReference type="InParanoid" id="Q9CQX2"/>
<dbReference type="OMA" id="NTCKSYW"/>
<dbReference type="OrthoDB" id="260519at2759"/>
<dbReference type="PhylomeDB" id="Q9CQX2"/>
<dbReference type="TreeFam" id="TF314537"/>
<dbReference type="Reactome" id="R-MMU-1660661">
    <property type="pathway name" value="Sphingolipid de novo biosynthesis"/>
</dbReference>
<dbReference type="Reactome" id="R-MMU-203615">
    <property type="pathway name" value="eNOS activation"/>
</dbReference>
<dbReference type="Reactome" id="R-MMU-211945">
    <property type="pathway name" value="Phase I - Functionalization of compounds"/>
</dbReference>
<dbReference type="BioGRID-ORCS" id="66427">
    <property type="hits" value="4 hits in 78 CRISPR screens"/>
</dbReference>
<dbReference type="CD-CODE" id="CE726F99">
    <property type="entry name" value="Postsynaptic density"/>
</dbReference>
<dbReference type="ChiTaRS" id="Cyb5b">
    <property type="organism name" value="mouse"/>
</dbReference>
<dbReference type="PRO" id="PR:Q9CQX2"/>
<dbReference type="Proteomes" id="UP000000589">
    <property type="component" value="Chromosome 8"/>
</dbReference>
<dbReference type="RNAct" id="Q9CQX2">
    <property type="molecule type" value="protein"/>
</dbReference>
<dbReference type="Bgee" id="ENSMUSG00000031924">
    <property type="expression patterns" value="Expressed in adrenal gland and 261 other cell types or tissues"/>
</dbReference>
<dbReference type="GO" id="GO:0005743">
    <property type="term" value="C:mitochondrial inner membrane"/>
    <property type="evidence" value="ECO:0007005"/>
    <property type="project" value="MGI"/>
</dbReference>
<dbReference type="GO" id="GO:0005741">
    <property type="term" value="C:mitochondrial outer membrane"/>
    <property type="evidence" value="ECO:0007669"/>
    <property type="project" value="UniProtKB-SubCell"/>
</dbReference>
<dbReference type="GO" id="GO:0005739">
    <property type="term" value="C:mitochondrion"/>
    <property type="evidence" value="ECO:0007005"/>
    <property type="project" value="MGI"/>
</dbReference>
<dbReference type="GO" id="GO:1903958">
    <property type="term" value="C:nitric-oxide synthase complex"/>
    <property type="evidence" value="ECO:0007669"/>
    <property type="project" value="Ensembl"/>
</dbReference>
<dbReference type="GO" id="GO:0020037">
    <property type="term" value="F:heme binding"/>
    <property type="evidence" value="ECO:0007669"/>
    <property type="project" value="Ensembl"/>
</dbReference>
<dbReference type="GO" id="GO:0046872">
    <property type="term" value="F:metal ion binding"/>
    <property type="evidence" value="ECO:0007669"/>
    <property type="project" value="UniProtKB-KW"/>
</dbReference>
<dbReference type="GO" id="GO:0050421">
    <property type="term" value="F:nitrite reductase (NO-forming) activity"/>
    <property type="evidence" value="ECO:0007669"/>
    <property type="project" value="Ensembl"/>
</dbReference>
<dbReference type="GO" id="GO:0006809">
    <property type="term" value="P:nitric oxide biosynthetic process"/>
    <property type="evidence" value="ECO:0007669"/>
    <property type="project" value="Ensembl"/>
</dbReference>
<dbReference type="FunFam" id="3.10.120.10:FF:000002">
    <property type="entry name" value="Cytochrome b5 type B"/>
    <property type="match status" value="1"/>
</dbReference>
<dbReference type="Gene3D" id="3.10.120.10">
    <property type="entry name" value="Cytochrome b5-like heme/steroid binding domain"/>
    <property type="match status" value="1"/>
</dbReference>
<dbReference type="InterPro" id="IPR001199">
    <property type="entry name" value="Cyt_B5-like_heme/steroid-bd"/>
</dbReference>
<dbReference type="InterPro" id="IPR036400">
    <property type="entry name" value="Cyt_B5-like_heme/steroid_sf"/>
</dbReference>
<dbReference type="InterPro" id="IPR018506">
    <property type="entry name" value="Cyt_B5_heme-BS"/>
</dbReference>
<dbReference type="InterPro" id="IPR050668">
    <property type="entry name" value="Cytochrome_b5"/>
</dbReference>
<dbReference type="PANTHER" id="PTHR19359">
    <property type="entry name" value="CYTOCHROME B5"/>
    <property type="match status" value="1"/>
</dbReference>
<dbReference type="PANTHER" id="PTHR19359:SF95">
    <property type="entry name" value="CYTOCHROME B5 TYPE B"/>
    <property type="match status" value="1"/>
</dbReference>
<dbReference type="Pfam" id="PF00173">
    <property type="entry name" value="Cyt-b5"/>
    <property type="match status" value="1"/>
</dbReference>
<dbReference type="PRINTS" id="PR00363">
    <property type="entry name" value="CYTOCHROMEB5"/>
</dbReference>
<dbReference type="SMART" id="SM01117">
    <property type="entry name" value="Cyt-b5"/>
    <property type="match status" value="1"/>
</dbReference>
<dbReference type="SUPFAM" id="SSF55856">
    <property type="entry name" value="Cytochrome b5-like heme/steroid binding domain"/>
    <property type="match status" value="1"/>
</dbReference>
<dbReference type="PROSITE" id="PS00191">
    <property type="entry name" value="CYTOCHROME_B5_1"/>
    <property type="match status" value="1"/>
</dbReference>
<dbReference type="PROSITE" id="PS50255">
    <property type="entry name" value="CYTOCHROME_B5_2"/>
    <property type="match status" value="1"/>
</dbReference>
<reference key="1">
    <citation type="journal article" date="2005" name="Science">
        <title>The transcriptional landscape of the mammalian genome.</title>
        <authorList>
            <person name="Carninci P."/>
            <person name="Kasukawa T."/>
            <person name="Katayama S."/>
            <person name="Gough J."/>
            <person name="Frith M.C."/>
            <person name="Maeda N."/>
            <person name="Oyama R."/>
            <person name="Ravasi T."/>
            <person name="Lenhard B."/>
            <person name="Wells C."/>
            <person name="Kodzius R."/>
            <person name="Shimokawa K."/>
            <person name="Bajic V.B."/>
            <person name="Brenner S.E."/>
            <person name="Batalov S."/>
            <person name="Forrest A.R."/>
            <person name="Zavolan M."/>
            <person name="Davis M.J."/>
            <person name="Wilming L.G."/>
            <person name="Aidinis V."/>
            <person name="Allen J.E."/>
            <person name="Ambesi-Impiombato A."/>
            <person name="Apweiler R."/>
            <person name="Aturaliya R.N."/>
            <person name="Bailey T.L."/>
            <person name="Bansal M."/>
            <person name="Baxter L."/>
            <person name="Beisel K.W."/>
            <person name="Bersano T."/>
            <person name="Bono H."/>
            <person name="Chalk A.M."/>
            <person name="Chiu K.P."/>
            <person name="Choudhary V."/>
            <person name="Christoffels A."/>
            <person name="Clutterbuck D.R."/>
            <person name="Crowe M.L."/>
            <person name="Dalla E."/>
            <person name="Dalrymple B.P."/>
            <person name="de Bono B."/>
            <person name="Della Gatta G."/>
            <person name="di Bernardo D."/>
            <person name="Down T."/>
            <person name="Engstrom P."/>
            <person name="Fagiolini M."/>
            <person name="Faulkner G."/>
            <person name="Fletcher C.F."/>
            <person name="Fukushima T."/>
            <person name="Furuno M."/>
            <person name="Futaki S."/>
            <person name="Gariboldi M."/>
            <person name="Georgii-Hemming P."/>
            <person name="Gingeras T.R."/>
            <person name="Gojobori T."/>
            <person name="Green R.E."/>
            <person name="Gustincich S."/>
            <person name="Harbers M."/>
            <person name="Hayashi Y."/>
            <person name="Hensch T.K."/>
            <person name="Hirokawa N."/>
            <person name="Hill D."/>
            <person name="Huminiecki L."/>
            <person name="Iacono M."/>
            <person name="Ikeo K."/>
            <person name="Iwama A."/>
            <person name="Ishikawa T."/>
            <person name="Jakt M."/>
            <person name="Kanapin A."/>
            <person name="Katoh M."/>
            <person name="Kawasawa Y."/>
            <person name="Kelso J."/>
            <person name="Kitamura H."/>
            <person name="Kitano H."/>
            <person name="Kollias G."/>
            <person name="Krishnan S.P."/>
            <person name="Kruger A."/>
            <person name="Kummerfeld S.K."/>
            <person name="Kurochkin I.V."/>
            <person name="Lareau L.F."/>
            <person name="Lazarevic D."/>
            <person name="Lipovich L."/>
            <person name="Liu J."/>
            <person name="Liuni S."/>
            <person name="McWilliam S."/>
            <person name="Madan Babu M."/>
            <person name="Madera M."/>
            <person name="Marchionni L."/>
            <person name="Matsuda H."/>
            <person name="Matsuzawa S."/>
            <person name="Miki H."/>
            <person name="Mignone F."/>
            <person name="Miyake S."/>
            <person name="Morris K."/>
            <person name="Mottagui-Tabar S."/>
            <person name="Mulder N."/>
            <person name="Nakano N."/>
            <person name="Nakauchi H."/>
            <person name="Ng P."/>
            <person name="Nilsson R."/>
            <person name="Nishiguchi S."/>
            <person name="Nishikawa S."/>
            <person name="Nori F."/>
            <person name="Ohara O."/>
            <person name="Okazaki Y."/>
            <person name="Orlando V."/>
            <person name="Pang K.C."/>
            <person name="Pavan W.J."/>
            <person name="Pavesi G."/>
            <person name="Pesole G."/>
            <person name="Petrovsky N."/>
            <person name="Piazza S."/>
            <person name="Reed J."/>
            <person name="Reid J.F."/>
            <person name="Ring B.Z."/>
            <person name="Ringwald M."/>
            <person name="Rost B."/>
            <person name="Ruan Y."/>
            <person name="Salzberg S.L."/>
            <person name="Sandelin A."/>
            <person name="Schneider C."/>
            <person name="Schoenbach C."/>
            <person name="Sekiguchi K."/>
            <person name="Semple C.A."/>
            <person name="Seno S."/>
            <person name="Sessa L."/>
            <person name="Sheng Y."/>
            <person name="Shibata Y."/>
            <person name="Shimada H."/>
            <person name="Shimada K."/>
            <person name="Silva D."/>
            <person name="Sinclair B."/>
            <person name="Sperling S."/>
            <person name="Stupka E."/>
            <person name="Sugiura K."/>
            <person name="Sultana R."/>
            <person name="Takenaka Y."/>
            <person name="Taki K."/>
            <person name="Tammoja K."/>
            <person name="Tan S.L."/>
            <person name="Tang S."/>
            <person name="Taylor M.S."/>
            <person name="Tegner J."/>
            <person name="Teichmann S.A."/>
            <person name="Ueda H.R."/>
            <person name="van Nimwegen E."/>
            <person name="Verardo R."/>
            <person name="Wei C.L."/>
            <person name="Yagi K."/>
            <person name="Yamanishi H."/>
            <person name="Zabarovsky E."/>
            <person name="Zhu S."/>
            <person name="Zimmer A."/>
            <person name="Hide W."/>
            <person name="Bult C."/>
            <person name="Grimmond S.M."/>
            <person name="Teasdale R.D."/>
            <person name="Liu E.T."/>
            <person name="Brusic V."/>
            <person name="Quackenbush J."/>
            <person name="Wahlestedt C."/>
            <person name="Mattick J.S."/>
            <person name="Hume D.A."/>
            <person name="Kai C."/>
            <person name="Sasaki D."/>
            <person name="Tomaru Y."/>
            <person name="Fukuda S."/>
            <person name="Kanamori-Katayama M."/>
            <person name="Suzuki M."/>
            <person name="Aoki J."/>
            <person name="Arakawa T."/>
            <person name="Iida J."/>
            <person name="Imamura K."/>
            <person name="Itoh M."/>
            <person name="Kato T."/>
            <person name="Kawaji H."/>
            <person name="Kawagashira N."/>
            <person name="Kawashima T."/>
            <person name="Kojima M."/>
            <person name="Kondo S."/>
            <person name="Konno H."/>
            <person name="Nakano K."/>
            <person name="Ninomiya N."/>
            <person name="Nishio T."/>
            <person name="Okada M."/>
            <person name="Plessy C."/>
            <person name="Shibata K."/>
            <person name="Shiraki T."/>
            <person name="Suzuki S."/>
            <person name="Tagami M."/>
            <person name="Waki K."/>
            <person name="Watahiki A."/>
            <person name="Okamura-Oho Y."/>
            <person name="Suzuki H."/>
            <person name="Kawai J."/>
            <person name="Hayashizaki Y."/>
        </authorList>
    </citation>
    <scope>NUCLEOTIDE SEQUENCE [LARGE SCALE MRNA]</scope>
    <source>
        <strain>C57BL/6J</strain>
        <strain>NOD</strain>
        <tissue>Mammary gland</tissue>
        <tissue>Pancreas</tissue>
        <tissue>Thymus</tissue>
    </source>
</reference>
<reference key="2">
    <citation type="journal article" date="2004" name="Genome Res.">
        <title>The status, quality, and expansion of the NIH full-length cDNA project: the Mammalian Gene Collection (MGC).</title>
        <authorList>
            <consortium name="The MGC Project Team"/>
        </authorList>
    </citation>
    <scope>NUCLEOTIDE SEQUENCE [LARGE SCALE MRNA]</scope>
    <source>
        <strain>C57BL/6J</strain>
        <strain>FVB/N</strain>
        <tissue>Brain</tissue>
        <tissue>Colon</tissue>
    </source>
</reference>
<reference key="3">
    <citation type="journal article" date="2007" name="Mol. Cell. Proteomics">
        <title>Mitochondrial phosphoproteome revealed by an improved IMAC method and MS/MS/MS.</title>
        <authorList>
            <person name="Lee J."/>
            <person name="Xu Y."/>
            <person name="Chen Y."/>
            <person name="Sprung R."/>
            <person name="Kim S.C."/>
            <person name="Xie S."/>
            <person name="Zhao Y."/>
        </authorList>
    </citation>
    <scope>PHOSPHORYLATION [LARGE SCALE ANALYSIS] AT SER-33</scope>
    <scope>IDENTIFICATION BY MASS SPECTROMETRY [LARGE SCALE ANALYSIS]</scope>
    <source>
        <tissue>Liver</tissue>
    </source>
</reference>
<reference key="4">
    <citation type="journal article" date="2007" name="Proc. Natl. Acad. Sci. U.S.A.">
        <title>Large-scale phosphorylation analysis of mouse liver.</title>
        <authorList>
            <person name="Villen J."/>
            <person name="Beausoleil S.A."/>
            <person name="Gerber S.A."/>
            <person name="Gygi S.P."/>
        </authorList>
    </citation>
    <scope>IDENTIFICATION BY MASS SPECTROMETRY [LARGE SCALE ANALYSIS]</scope>
    <source>
        <tissue>Liver</tissue>
    </source>
</reference>
<reference key="5">
    <citation type="journal article" date="2010" name="Cell">
        <title>A tissue-specific atlas of mouse protein phosphorylation and expression.</title>
        <authorList>
            <person name="Huttlin E.L."/>
            <person name="Jedrychowski M.P."/>
            <person name="Elias J.E."/>
            <person name="Goswami T."/>
            <person name="Rad R."/>
            <person name="Beausoleil S.A."/>
            <person name="Villen J."/>
            <person name="Haas W."/>
            <person name="Sowa M.E."/>
            <person name="Gygi S.P."/>
        </authorList>
    </citation>
    <scope>PHOSPHORYLATION [LARGE SCALE ANALYSIS] AT SER-33 AND SER-80</scope>
    <scope>IDENTIFICATION BY MASS SPECTROMETRY [LARGE SCALE ANALYSIS]</scope>
    <source>
        <tissue>Brain</tissue>
        <tissue>Brown adipose tissue</tissue>
        <tissue>Heart</tissue>
        <tissue>Kidney</tissue>
        <tissue>Liver</tissue>
        <tissue>Lung</tissue>
        <tissue>Pancreas</tissue>
        <tissue>Spleen</tissue>
        <tissue>Testis</tissue>
    </source>
</reference>
<comment type="function">
    <text evidence="1">Cytochrome b5 is a membrane-bound hemoprotein functioning as an electron carrier for several membrane-bound oxygenases.</text>
</comment>
<comment type="subunit">
    <text evidence="1">Component of a complex composed of cytochrome b5, NADH-cytochrome b5 reductase (CYB5R3) and MTARC2.</text>
</comment>
<comment type="subcellular location">
    <subcellularLocation>
        <location evidence="3">Mitochondrion outer membrane</location>
    </subcellularLocation>
</comment>
<comment type="similarity">
    <text evidence="6">Belongs to the cytochrome b5 family.</text>
</comment>
<keyword id="KW-0007">Acetylation</keyword>
<keyword id="KW-0249">Electron transport</keyword>
<keyword id="KW-0349">Heme</keyword>
<keyword id="KW-0408">Iron</keyword>
<keyword id="KW-0472">Membrane</keyword>
<keyword id="KW-0479">Metal-binding</keyword>
<keyword id="KW-0496">Mitochondrion</keyword>
<keyword id="KW-1000">Mitochondrion outer membrane</keyword>
<keyword id="KW-0597">Phosphoprotein</keyword>
<keyword id="KW-1185">Reference proteome</keyword>
<keyword id="KW-0812">Transmembrane</keyword>
<keyword id="KW-1133">Transmembrane helix</keyword>
<keyword id="KW-0813">Transport</keyword>
<gene>
    <name type="primary">Cyb5b</name>
    <name type="synonym">Cyb5m</name>
</gene>
<evidence type="ECO:0000250" key="1"/>
<evidence type="ECO:0000250" key="2">
    <source>
        <dbReference type="UniProtKB" id="O43169"/>
    </source>
</evidence>
<evidence type="ECO:0000250" key="3">
    <source>
        <dbReference type="UniProtKB" id="P04166"/>
    </source>
</evidence>
<evidence type="ECO:0000255" key="4"/>
<evidence type="ECO:0000255" key="5">
    <source>
        <dbReference type="PROSITE-ProRule" id="PRU00279"/>
    </source>
</evidence>
<evidence type="ECO:0000305" key="6"/>
<evidence type="ECO:0007744" key="7">
    <source>
    </source>
</evidence>
<evidence type="ECO:0007744" key="8">
    <source>
    </source>
</evidence>
<name>CYB5B_MOUSE</name>
<sequence>MATPEASGSGEKVEGSEPSVTYYRLEEVAKRNSAEETWMVIHGRVYDITRFLSEHPGGEEVLLEQAGADATESFEDVGHSPDAREMLKQYYIGDVHPSDLKPKGDDKDPSKNNSCQSSWAYWFVPIVGAILIGFLYRHFWADSKSS</sequence>